<feature type="chain" id="PRO_0000086212" description="Ribosomal protein S6 kinase 2 beta">
    <location>
        <begin position="1"/>
        <end position="629"/>
    </location>
</feature>
<feature type="domain" description="Protein kinase 1" evidence="2">
    <location>
        <begin position="62"/>
        <end position="321"/>
    </location>
</feature>
<feature type="domain" description="AGC-kinase C-terminal" evidence="3">
    <location>
        <begin position="322"/>
        <end position="391"/>
    </location>
</feature>
<feature type="domain" description="Protein kinase 2" evidence="2">
    <location>
        <begin position="416"/>
        <end position="629"/>
    </location>
</feature>
<feature type="active site" description="Proton acceptor" evidence="1">
    <location>
        <position position="187"/>
    </location>
</feature>
<feature type="active site" description="Proton acceptor" evidence="1">
    <location>
        <position position="533"/>
    </location>
</feature>
<feature type="binding site" evidence="2">
    <location>
        <begin position="68"/>
        <end position="76"/>
    </location>
    <ligand>
        <name>ATP</name>
        <dbReference type="ChEBI" id="CHEBI:30616"/>
    </ligand>
</feature>
<feature type="binding site" evidence="2">
    <location>
        <position position="94"/>
    </location>
    <ligand>
        <name>ATP</name>
        <dbReference type="ChEBI" id="CHEBI:30616"/>
    </ligand>
</feature>
<feature type="binding site" evidence="2">
    <location>
        <begin position="422"/>
        <end position="430"/>
    </location>
    <ligand>
        <name>ATP</name>
        <dbReference type="ChEBI" id="CHEBI:30616"/>
    </ligand>
</feature>
<feature type="binding site" evidence="2">
    <location>
        <position position="445"/>
    </location>
    <ligand>
        <name>ATP</name>
        <dbReference type="ChEBI" id="CHEBI:30616"/>
    </ligand>
</feature>
<feature type="modified residue" description="Phosphoserine" evidence="1">
    <location>
        <position position="221"/>
    </location>
</feature>
<feature type="modified residue" description="Phosphothreonine" evidence="1">
    <location>
        <position position="359"/>
    </location>
</feature>
<feature type="modified residue" description="Phosphoserine" evidence="1">
    <location>
        <position position="363"/>
    </location>
</feature>
<feature type="modified residue" description="Phosphoserine; by autocatalysis" evidence="1">
    <location>
        <position position="380"/>
    </location>
</feature>
<feature type="modified residue" description="Phosphothreonine" evidence="1">
    <location>
        <position position="571"/>
    </location>
</feature>
<organism>
    <name type="scientific">Xenopus laevis</name>
    <name type="common">African clawed frog</name>
    <dbReference type="NCBI Taxonomy" id="8355"/>
    <lineage>
        <taxon>Eukaryota</taxon>
        <taxon>Metazoa</taxon>
        <taxon>Chordata</taxon>
        <taxon>Craniata</taxon>
        <taxon>Vertebrata</taxon>
        <taxon>Euteleostomi</taxon>
        <taxon>Amphibia</taxon>
        <taxon>Batrachia</taxon>
        <taxon>Anura</taxon>
        <taxon>Pipoidea</taxon>
        <taxon>Pipidae</taxon>
        <taxon>Xenopodinae</taxon>
        <taxon>Xenopus</taxon>
        <taxon>Xenopus</taxon>
    </lineage>
</organism>
<name>KS6AB_XENLA</name>
<sequence length="629" mass="71287">MPLAQLVDLWPEVELVHEDTENGHGGPEDRGRHTSKDEVVVKEIPITHHVKEGAEKADQSHFVLLKVLGQGSFGKVFLVRKITPPDANQLYAMKVLKKATLKVRDRVRTKMERDILADVHHPFVVRLHYAFQTEGKLYLILDFLRGGDLFTRLSKEVMFTEEDVKFYLAELALGLDHLHSLGIIYRDLKPENILLDEEGHIKLTDFGLSKEAIDHEKKAYSFCGTVEYMAPEVVNRQGHSHGADWWSYGVLMFEMLTGSLPFQGKDRKETMTLILKAKLGMPQFLSNEAQSLLRALFKRNATNRLGSGVEGAEELKRHPFFSTIDWNKLYRRELSPPFKPSVTQPDDTYYFDTEFTSRTPKDSPGIPPSAGAHQLFRGFSFVAPVLVEEDAKKTSSPPVLSVPKTHSKNVLFTDVYTVRETIGVGSYSVCKRCVHKGTNMEYAVKVIDKSKRDPSEEIEILRRYGQHPNIITLKDVYEECNSIYLVTELMRGGELLDRILRQKFFSEREACSVLFTVCKTVEYLHSQGVVHRDLKPSNILYVDESGDPESIRICDFGFSKQLRAENGLLMTPCYTANFVAPEVLKRQGYDEGCDIWSLGILLYTMLAGYTPFANGPGDTPEEILARIGS</sequence>
<comment type="function">
    <text evidence="1">Serine/threonine kinase that may play a role in mediating the growth-factor and stress induced activation of transcription.</text>
</comment>
<comment type="catalytic activity">
    <reaction>
        <text>L-seryl-[protein] + ATP = O-phospho-L-seryl-[protein] + ADP + H(+)</text>
        <dbReference type="Rhea" id="RHEA:17989"/>
        <dbReference type="Rhea" id="RHEA-COMP:9863"/>
        <dbReference type="Rhea" id="RHEA-COMP:11604"/>
        <dbReference type="ChEBI" id="CHEBI:15378"/>
        <dbReference type="ChEBI" id="CHEBI:29999"/>
        <dbReference type="ChEBI" id="CHEBI:30616"/>
        <dbReference type="ChEBI" id="CHEBI:83421"/>
        <dbReference type="ChEBI" id="CHEBI:456216"/>
        <dbReference type="EC" id="2.7.11.1"/>
    </reaction>
</comment>
<comment type="catalytic activity">
    <reaction>
        <text>L-threonyl-[protein] + ATP = O-phospho-L-threonyl-[protein] + ADP + H(+)</text>
        <dbReference type="Rhea" id="RHEA:46608"/>
        <dbReference type="Rhea" id="RHEA-COMP:11060"/>
        <dbReference type="Rhea" id="RHEA-COMP:11605"/>
        <dbReference type="ChEBI" id="CHEBI:15378"/>
        <dbReference type="ChEBI" id="CHEBI:30013"/>
        <dbReference type="ChEBI" id="CHEBI:30616"/>
        <dbReference type="ChEBI" id="CHEBI:61977"/>
        <dbReference type="ChEBI" id="CHEBI:456216"/>
        <dbReference type="EC" id="2.7.11.1"/>
    </reaction>
</comment>
<comment type="cofactor">
    <cofactor evidence="1">
        <name>Mg(2+)</name>
        <dbReference type="ChEBI" id="CHEBI:18420"/>
    </cofactor>
</comment>
<comment type="activity regulation">
    <text evidence="1">Activated by multiple phosphorylations on threonine and serine residues.</text>
</comment>
<comment type="PTM">
    <text evidence="1">Autophosphorylated on Ser-380, as part of the activation process.</text>
</comment>
<comment type="similarity">
    <text evidence="4">Belongs to the protein kinase superfamily. AGC Ser/Thr protein kinase family. S6 kinase subfamily.</text>
</comment>
<dbReference type="EC" id="2.7.11.1"/>
<dbReference type="EMBL" id="M20188">
    <property type="protein sequence ID" value="AAA49959.1"/>
    <property type="molecule type" value="mRNA"/>
</dbReference>
<dbReference type="PIR" id="A30001">
    <property type="entry name" value="A30001"/>
</dbReference>
<dbReference type="SMR" id="P10666"/>
<dbReference type="AGR" id="Xenbase:XB-GENE-479500"/>
<dbReference type="Xenbase" id="XB-GENE-479500">
    <property type="gene designation" value="rps6ka1.L"/>
</dbReference>
<dbReference type="BRENDA" id="2.7.11.1">
    <property type="organism ID" value="6725"/>
</dbReference>
<dbReference type="Proteomes" id="UP000186698">
    <property type="component" value="Unplaced"/>
</dbReference>
<dbReference type="GO" id="GO:0005737">
    <property type="term" value="C:cytoplasm"/>
    <property type="evidence" value="ECO:0000318"/>
    <property type="project" value="GO_Central"/>
</dbReference>
<dbReference type="GO" id="GO:0005654">
    <property type="term" value="C:nucleoplasm"/>
    <property type="evidence" value="ECO:0000318"/>
    <property type="project" value="GO_Central"/>
</dbReference>
<dbReference type="GO" id="GO:0005524">
    <property type="term" value="F:ATP binding"/>
    <property type="evidence" value="ECO:0007669"/>
    <property type="project" value="UniProtKB-KW"/>
</dbReference>
<dbReference type="GO" id="GO:0000287">
    <property type="term" value="F:magnesium ion binding"/>
    <property type="evidence" value="ECO:0007669"/>
    <property type="project" value="InterPro"/>
</dbReference>
<dbReference type="GO" id="GO:0106310">
    <property type="term" value="F:protein serine kinase activity"/>
    <property type="evidence" value="ECO:0007669"/>
    <property type="project" value="RHEA"/>
</dbReference>
<dbReference type="GO" id="GO:0004711">
    <property type="term" value="F:ribosomal protein S6 kinase activity"/>
    <property type="evidence" value="ECO:0000318"/>
    <property type="project" value="GO_Central"/>
</dbReference>
<dbReference type="GO" id="GO:0045893">
    <property type="term" value="P:positive regulation of DNA-templated transcription"/>
    <property type="evidence" value="ECO:0000318"/>
    <property type="project" value="GO_Central"/>
</dbReference>
<dbReference type="GO" id="GO:0038202">
    <property type="term" value="P:TORC1 signaling"/>
    <property type="evidence" value="ECO:0000318"/>
    <property type="project" value="GO_Central"/>
</dbReference>
<dbReference type="CDD" id="cd05582">
    <property type="entry name" value="STKc_RSK_N"/>
    <property type="match status" value="1"/>
</dbReference>
<dbReference type="FunFam" id="1.10.510.10:FF:000010">
    <property type="entry name" value="Ribosomal protein S6 kinase"/>
    <property type="match status" value="1"/>
</dbReference>
<dbReference type="FunFam" id="3.30.200.20:FF:000013">
    <property type="entry name" value="Ribosomal protein S6 kinase"/>
    <property type="match status" value="1"/>
</dbReference>
<dbReference type="FunFam" id="3.30.200.20:FF:000121">
    <property type="entry name" value="Ribosomal protein S6 kinase"/>
    <property type="match status" value="1"/>
</dbReference>
<dbReference type="FunFam" id="1.10.510.10:FF:001170">
    <property type="entry name" value="Ribosomal protein S6 kinase alpha-1"/>
    <property type="match status" value="1"/>
</dbReference>
<dbReference type="Gene3D" id="3.30.200.20">
    <property type="entry name" value="Phosphorylase Kinase, domain 1"/>
    <property type="match status" value="2"/>
</dbReference>
<dbReference type="Gene3D" id="1.10.510.10">
    <property type="entry name" value="Transferase(Phosphotransferase) domain 1"/>
    <property type="match status" value="2"/>
</dbReference>
<dbReference type="InterPro" id="IPR000961">
    <property type="entry name" value="AGC-kinase_C"/>
</dbReference>
<dbReference type="InterPro" id="IPR011009">
    <property type="entry name" value="Kinase-like_dom_sf"/>
</dbReference>
<dbReference type="InterPro" id="IPR017892">
    <property type="entry name" value="Pkinase_C"/>
</dbReference>
<dbReference type="InterPro" id="IPR000719">
    <property type="entry name" value="Prot_kinase_dom"/>
</dbReference>
<dbReference type="InterPro" id="IPR017441">
    <property type="entry name" value="Protein_kinase_ATP_BS"/>
</dbReference>
<dbReference type="InterPro" id="IPR016239">
    <property type="entry name" value="Ribosomal_S6_kinase_II"/>
</dbReference>
<dbReference type="InterPro" id="IPR041906">
    <property type="entry name" value="RSK_N"/>
</dbReference>
<dbReference type="InterPro" id="IPR008271">
    <property type="entry name" value="Ser/Thr_kinase_AS"/>
</dbReference>
<dbReference type="PANTHER" id="PTHR24351">
    <property type="entry name" value="RIBOSOMAL PROTEIN S6 KINASE"/>
    <property type="match status" value="1"/>
</dbReference>
<dbReference type="Pfam" id="PF00069">
    <property type="entry name" value="Pkinase"/>
    <property type="match status" value="2"/>
</dbReference>
<dbReference type="Pfam" id="PF00433">
    <property type="entry name" value="Pkinase_C"/>
    <property type="match status" value="1"/>
</dbReference>
<dbReference type="PIRSF" id="PIRSF000606">
    <property type="entry name" value="Ribsml_S6_kin_2"/>
    <property type="match status" value="1"/>
</dbReference>
<dbReference type="SMART" id="SM00133">
    <property type="entry name" value="S_TK_X"/>
    <property type="match status" value="1"/>
</dbReference>
<dbReference type="SMART" id="SM00220">
    <property type="entry name" value="S_TKc"/>
    <property type="match status" value="2"/>
</dbReference>
<dbReference type="SUPFAM" id="SSF56112">
    <property type="entry name" value="Protein kinase-like (PK-like)"/>
    <property type="match status" value="2"/>
</dbReference>
<dbReference type="PROSITE" id="PS51285">
    <property type="entry name" value="AGC_KINASE_CTER"/>
    <property type="match status" value="1"/>
</dbReference>
<dbReference type="PROSITE" id="PS00107">
    <property type="entry name" value="PROTEIN_KINASE_ATP"/>
    <property type="match status" value="2"/>
</dbReference>
<dbReference type="PROSITE" id="PS50011">
    <property type="entry name" value="PROTEIN_KINASE_DOM"/>
    <property type="match status" value="2"/>
</dbReference>
<dbReference type="PROSITE" id="PS00108">
    <property type="entry name" value="PROTEIN_KINASE_ST"/>
    <property type="match status" value="2"/>
</dbReference>
<keyword id="KW-0067">ATP-binding</keyword>
<keyword id="KW-0418">Kinase</keyword>
<keyword id="KW-0547">Nucleotide-binding</keyword>
<keyword id="KW-0597">Phosphoprotein</keyword>
<keyword id="KW-1185">Reference proteome</keyword>
<keyword id="KW-0677">Repeat</keyword>
<keyword id="KW-0723">Serine/threonine-protein kinase</keyword>
<keyword id="KW-0808">Transferase</keyword>
<proteinExistence type="evidence at transcript level"/>
<accession>P10666</accession>
<evidence type="ECO:0000250" key="1"/>
<evidence type="ECO:0000255" key="2">
    <source>
        <dbReference type="PROSITE-ProRule" id="PRU00159"/>
    </source>
</evidence>
<evidence type="ECO:0000255" key="3">
    <source>
        <dbReference type="PROSITE-ProRule" id="PRU00618"/>
    </source>
</evidence>
<evidence type="ECO:0000305" key="4"/>
<protein>
    <recommendedName>
        <fullName>Ribosomal protein S6 kinase 2 beta</fullName>
        <ecNumber>2.7.11.1</ecNumber>
    </recommendedName>
    <alternativeName>
        <fullName>Ribosomal protein S6 kinase II beta</fullName>
        <shortName>S6KII-beta</shortName>
    </alternativeName>
    <alternativeName>
        <fullName>p90-RSK</fullName>
    </alternativeName>
</protein>
<reference key="1">
    <citation type="journal article" date="1988" name="Proc. Natl. Acad. Sci. U.S.A.">
        <title>A Xenopus ribosomal protein S6 kinase has two apparent kinase domains that are each similar to distinct protein kinases.</title>
        <authorList>
            <person name="Jones S.W."/>
            <person name="Erikson E."/>
            <person name="Blenis J."/>
            <person name="Maller J.L."/>
            <person name="Erikson R.L."/>
        </authorList>
    </citation>
    <scope>NUCLEOTIDE SEQUENCE [MRNA]</scope>
</reference>